<dbReference type="EC" id="5.4.99.27" evidence="1"/>
<dbReference type="EMBL" id="CP000241">
    <property type="protein sequence ID" value="ABF84974.1"/>
    <property type="molecule type" value="Genomic_DNA"/>
</dbReference>
<dbReference type="RefSeq" id="WP_001052424.1">
    <property type="nucleotide sequence ID" value="NC_008086.1"/>
</dbReference>
<dbReference type="SMR" id="Q1CSU8"/>
<dbReference type="KEGG" id="hpa:HPAG1_0907"/>
<dbReference type="HOGENOM" id="CLU_005281_4_0_7"/>
<dbReference type="GO" id="GO:0005829">
    <property type="term" value="C:cytosol"/>
    <property type="evidence" value="ECO:0007669"/>
    <property type="project" value="TreeGrafter"/>
</dbReference>
<dbReference type="GO" id="GO:0003723">
    <property type="term" value="F:RNA binding"/>
    <property type="evidence" value="ECO:0007669"/>
    <property type="project" value="InterPro"/>
</dbReference>
<dbReference type="GO" id="GO:0160150">
    <property type="term" value="F:tRNA pseudouridine(13) synthase activity"/>
    <property type="evidence" value="ECO:0007669"/>
    <property type="project" value="UniProtKB-EC"/>
</dbReference>
<dbReference type="GO" id="GO:0031119">
    <property type="term" value="P:tRNA pseudouridine synthesis"/>
    <property type="evidence" value="ECO:0007669"/>
    <property type="project" value="UniProtKB-UniRule"/>
</dbReference>
<dbReference type="CDD" id="cd02575">
    <property type="entry name" value="PseudoU_synth_EcTruD"/>
    <property type="match status" value="1"/>
</dbReference>
<dbReference type="FunFam" id="3.30.2340.10:FF:000005">
    <property type="entry name" value="tRNA pseudouridine synthase D"/>
    <property type="match status" value="1"/>
</dbReference>
<dbReference type="FunFam" id="3.30.2350.20:FF:000008">
    <property type="entry name" value="tRNA pseudouridine synthase D"/>
    <property type="match status" value="1"/>
</dbReference>
<dbReference type="Gene3D" id="3.30.2350.20">
    <property type="entry name" value="TruD, catalytic domain"/>
    <property type="match status" value="1"/>
</dbReference>
<dbReference type="HAMAP" id="MF_01082">
    <property type="entry name" value="TruD"/>
    <property type="match status" value="1"/>
</dbReference>
<dbReference type="InterPro" id="IPR020103">
    <property type="entry name" value="PsdUridine_synth_cat_dom_sf"/>
</dbReference>
<dbReference type="InterPro" id="IPR001656">
    <property type="entry name" value="PsdUridine_synth_TruD"/>
</dbReference>
<dbReference type="InterPro" id="IPR020119">
    <property type="entry name" value="PsdUridine_synth_TruD_CS"/>
</dbReference>
<dbReference type="InterPro" id="IPR011760">
    <property type="entry name" value="PsdUridine_synth_TruD_insert"/>
</dbReference>
<dbReference type="InterPro" id="IPR042214">
    <property type="entry name" value="TruD_catalytic"/>
</dbReference>
<dbReference type="InterPro" id="IPR050170">
    <property type="entry name" value="TruD_pseudoU_synthase"/>
</dbReference>
<dbReference type="NCBIfam" id="NF002154">
    <property type="entry name" value="PRK00984.1-3"/>
    <property type="match status" value="1"/>
</dbReference>
<dbReference type="NCBIfam" id="TIGR00094">
    <property type="entry name" value="tRNA_TruD_broad"/>
    <property type="match status" value="1"/>
</dbReference>
<dbReference type="PANTHER" id="PTHR47811">
    <property type="entry name" value="TRNA PSEUDOURIDINE SYNTHASE D"/>
    <property type="match status" value="1"/>
</dbReference>
<dbReference type="PANTHER" id="PTHR47811:SF1">
    <property type="entry name" value="TRNA PSEUDOURIDINE SYNTHASE D"/>
    <property type="match status" value="1"/>
</dbReference>
<dbReference type="Pfam" id="PF01142">
    <property type="entry name" value="TruD"/>
    <property type="match status" value="1"/>
</dbReference>
<dbReference type="PIRSF" id="PIRSF037016">
    <property type="entry name" value="Pseudouridin_synth_euk_prd"/>
    <property type="match status" value="1"/>
</dbReference>
<dbReference type="SUPFAM" id="SSF55120">
    <property type="entry name" value="Pseudouridine synthase"/>
    <property type="match status" value="1"/>
</dbReference>
<dbReference type="PROSITE" id="PS50984">
    <property type="entry name" value="TRUD"/>
    <property type="match status" value="1"/>
</dbReference>
<dbReference type="PROSITE" id="PS01268">
    <property type="entry name" value="UPF0024"/>
    <property type="match status" value="1"/>
</dbReference>
<keyword id="KW-0413">Isomerase</keyword>
<keyword id="KW-0819">tRNA processing</keyword>
<protein>
    <recommendedName>
        <fullName evidence="1">tRNA pseudouridine synthase D</fullName>
        <ecNumber evidence="1">5.4.99.27</ecNumber>
    </recommendedName>
    <alternativeName>
        <fullName evidence="1">tRNA pseudouridine(13) synthase</fullName>
    </alternativeName>
    <alternativeName>
        <fullName evidence="1">tRNA pseudouridylate synthase D</fullName>
    </alternativeName>
    <alternativeName>
        <fullName evidence="1">tRNA-uridine isomerase D</fullName>
    </alternativeName>
</protein>
<name>TRUD_HELPH</name>
<accession>Q1CSU8</accession>
<comment type="function">
    <text evidence="1">Responsible for synthesis of pseudouridine from uracil-13 in transfer RNAs.</text>
</comment>
<comment type="catalytic activity">
    <reaction evidence="1">
        <text>uridine(13) in tRNA = pseudouridine(13) in tRNA</text>
        <dbReference type="Rhea" id="RHEA:42540"/>
        <dbReference type="Rhea" id="RHEA-COMP:10105"/>
        <dbReference type="Rhea" id="RHEA-COMP:10106"/>
        <dbReference type="ChEBI" id="CHEBI:65314"/>
        <dbReference type="ChEBI" id="CHEBI:65315"/>
        <dbReference type="EC" id="5.4.99.27"/>
    </reaction>
</comment>
<comment type="similarity">
    <text evidence="1">Belongs to the pseudouridine synthase TruD family.</text>
</comment>
<sequence>MNLNFMPLLHAYNHASIDFHFNSSARDFCVHEVPLYEFSNTGEHAVIQVRKSGLSTLEMLQVFSQILGVRIAELGYAGLKDKNALTTQFVSLPKKYAPLLEKNTHNLQERNLKILSLNYHHNKIKLGHLKGNRFFMRFKKMTPLNAQKTEQVLEQIVQFGMPNYFGSQRFGKFNDNHQEGLKILQNQTKFAHQKLNAFLISSYQSYLFNSLLSKRLEISKIISAFSLKENLEFFKQKNLSVDSNTLKTLKNQAHPFKILEGDVMCHYPYGKFFDALELEKESERFLKKEVVPTGLLDGKKALYAKNLSFEIEKEFRHNLLSSHAKTLGSRRFFWVFAENVTSQYIKEKAQFELGFYLPKGSYASALLKEIKHEKGENNDEF</sequence>
<reference key="1">
    <citation type="journal article" date="2006" name="Proc. Natl. Acad. Sci. U.S.A.">
        <title>The complete genome sequence of a chronic atrophic gastritis Helicobacter pylori strain: evolution during disease progression.</title>
        <authorList>
            <person name="Oh J.D."/>
            <person name="Kling-Baeckhed H."/>
            <person name="Giannakis M."/>
            <person name="Xu J."/>
            <person name="Fulton R.S."/>
            <person name="Fulton L.A."/>
            <person name="Cordum H.S."/>
            <person name="Wang C."/>
            <person name="Elliott G."/>
            <person name="Edwards J."/>
            <person name="Mardis E.R."/>
            <person name="Engstrand L.G."/>
            <person name="Gordon J.I."/>
        </authorList>
    </citation>
    <scope>NUCLEOTIDE SEQUENCE [LARGE SCALE GENOMIC DNA]</scope>
    <source>
        <strain>HPAG1</strain>
    </source>
</reference>
<evidence type="ECO:0000255" key="1">
    <source>
        <dbReference type="HAMAP-Rule" id="MF_01082"/>
    </source>
</evidence>
<feature type="chain" id="PRO_1000084746" description="tRNA pseudouridine synthase D">
    <location>
        <begin position="1"/>
        <end position="381"/>
    </location>
</feature>
<feature type="domain" description="TRUD" evidence="1">
    <location>
        <begin position="160"/>
        <end position="335"/>
    </location>
</feature>
<feature type="active site" description="Nucleophile" evidence="1">
    <location>
        <position position="81"/>
    </location>
</feature>
<gene>
    <name evidence="1" type="primary">truD</name>
    <name type="ordered locus">HPAG1_0907</name>
</gene>
<proteinExistence type="inferred from homology"/>
<organism>
    <name type="scientific">Helicobacter pylori (strain HPAG1)</name>
    <dbReference type="NCBI Taxonomy" id="357544"/>
    <lineage>
        <taxon>Bacteria</taxon>
        <taxon>Pseudomonadati</taxon>
        <taxon>Campylobacterota</taxon>
        <taxon>Epsilonproteobacteria</taxon>
        <taxon>Campylobacterales</taxon>
        <taxon>Helicobacteraceae</taxon>
        <taxon>Helicobacter</taxon>
    </lineage>
</organism>